<accession>A0A0U1RQ45</accession>
<sequence length="177" mass="17701">MPQAKKSTETLAPAPPGRSRSLLRSLPSPALCCACGLCVLLAGLNVTLVGAFAAFLPGHNVPLVVGPALLVLALGFFAACCVCSRRGPVPRARSSATAGQGGGRPGTVALEMESSERTAQDTTAVQLSPAASAASSGRSSPGPGLFALDPPAPATAAPYLPRTEGTQLNFPRDPAAS</sequence>
<organism>
    <name type="scientific">Mus musculus</name>
    <name type="common">Mouse</name>
    <dbReference type="NCBI Taxonomy" id="10090"/>
    <lineage>
        <taxon>Eukaryota</taxon>
        <taxon>Metazoa</taxon>
        <taxon>Chordata</taxon>
        <taxon>Craniata</taxon>
        <taxon>Vertebrata</taxon>
        <taxon>Euteleostomi</taxon>
        <taxon>Mammalia</taxon>
        <taxon>Eutheria</taxon>
        <taxon>Euarchontoglires</taxon>
        <taxon>Glires</taxon>
        <taxon>Rodentia</taxon>
        <taxon>Myomorpha</taxon>
        <taxon>Muroidea</taxon>
        <taxon>Muridae</taxon>
        <taxon>Murinae</taxon>
        <taxon>Mus</taxon>
        <taxon>Mus</taxon>
    </lineage>
</organism>
<protein>
    <recommendedName>
        <fullName evidence="3">Transmembrane protein 275</fullName>
    </recommendedName>
</protein>
<comment type="subcellular location">
    <subcellularLocation>
        <location evidence="1">Membrane</location>
        <topology evidence="1">Multi-pass membrane protein</topology>
    </subcellularLocation>
</comment>
<name>TM275_MOUSE</name>
<reference key="1">
    <citation type="journal article" date="2009" name="PLoS Biol.">
        <title>Lineage-specific biology revealed by a finished genome assembly of the mouse.</title>
        <authorList>
            <person name="Church D.M."/>
            <person name="Goodstadt L."/>
            <person name="Hillier L.W."/>
            <person name="Zody M.C."/>
            <person name="Goldstein S."/>
            <person name="She X."/>
            <person name="Bult C.J."/>
            <person name="Agarwala R."/>
            <person name="Cherry J.L."/>
            <person name="DiCuccio M."/>
            <person name="Hlavina W."/>
            <person name="Kapustin Y."/>
            <person name="Meric P."/>
            <person name="Maglott D."/>
            <person name="Birtle Z."/>
            <person name="Marques A.C."/>
            <person name="Graves T."/>
            <person name="Zhou S."/>
            <person name="Teague B."/>
            <person name="Potamousis K."/>
            <person name="Churas C."/>
            <person name="Place M."/>
            <person name="Herschleb J."/>
            <person name="Runnheim R."/>
            <person name="Forrest D."/>
            <person name="Amos-Landgraf J."/>
            <person name="Schwartz D.C."/>
            <person name="Cheng Z."/>
            <person name="Lindblad-Toh K."/>
            <person name="Eichler E.E."/>
            <person name="Ponting C.P."/>
        </authorList>
    </citation>
    <scope>NUCLEOTIDE SEQUENCE [LARGE SCALE GENOMIC DNA]</scope>
    <source>
        <strain>C57BL/6J</strain>
    </source>
</reference>
<reference key="2">
    <citation type="submission" date="2005-09" db="EMBL/GenBank/DDBJ databases">
        <authorList>
            <person name="Mural R.J."/>
            <person name="Adams M.D."/>
            <person name="Myers E.W."/>
            <person name="Smith H.O."/>
            <person name="Venter J.C."/>
        </authorList>
    </citation>
    <scope>NUCLEOTIDE SEQUENCE [LARGE SCALE GENOMIC DNA]</scope>
</reference>
<dbReference type="EMBL" id="AL627085">
    <property type="status" value="NOT_ANNOTATED_CDS"/>
    <property type="molecule type" value="Genomic_DNA"/>
</dbReference>
<dbReference type="EMBL" id="CH466552">
    <property type="protein sequence ID" value="EDL30630.1"/>
    <property type="molecule type" value="Genomic_DNA"/>
</dbReference>
<dbReference type="CCDS" id="CCDS89812.1"/>
<dbReference type="RefSeq" id="NP_001343989.1">
    <property type="nucleotide sequence ID" value="NM_001357060.1"/>
</dbReference>
<dbReference type="RefSeq" id="XP_017175991.1">
    <property type="nucleotide sequence ID" value="XM_017320502.1"/>
</dbReference>
<dbReference type="ProteomicsDB" id="344735"/>
<dbReference type="Ensembl" id="ENSMUST00000132221.3">
    <property type="protein sequence ID" value="ENSMUSP00000146242.2"/>
    <property type="gene ID" value="ENSMUSG00000034185.11"/>
</dbReference>
<dbReference type="GeneID" id="76237"/>
<dbReference type="AGR" id="MGI:1923487"/>
<dbReference type="MGI" id="MGI:1923487">
    <property type="gene designation" value="Tmem275"/>
</dbReference>
<dbReference type="VEuPathDB" id="HostDB:ENSMUSG00000034185"/>
<dbReference type="GeneTree" id="ENSGT00390000008086"/>
<dbReference type="InParanoid" id="A0A0U1RQ45"/>
<dbReference type="OMA" id="ACCVVSR"/>
<dbReference type="OrthoDB" id="8932092at2759"/>
<dbReference type="BioGRID-ORCS" id="76237">
    <property type="hits" value="0 hits in 30 CRISPR screens"/>
</dbReference>
<dbReference type="PRO" id="PR:A0A0U1RQ45"/>
<dbReference type="Proteomes" id="UP000000589">
    <property type="component" value="Chromosome 4"/>
</dbReference>
<dbReference type="RNAct" id="A0A0U1RQ45">
    <property type="molecule type" value="protein"/>
</dbReference>
<dbReference type="Bgee" id="ENSMUSG00000034185">
    <property type="expression patterns" value="Expressed in superior frontal gyrus and 6 other cell types or tissues"/>
</dbReference>
<dbReference type="ExpressionAtlas" id="A0A0U1RQ45">
    <property type="expression patterns" value="baseline and differential"/>
</dbReference>
<dbReference type="GO" id="GO:0016020">
    <property type="term" value="C:membrane"/>
    <property type="evidence" value="ECO:0007669"/>
    <property type="project" value="UniProtKB-SubCell"/>
</dbReference>
<gene>
    <name evidence="3" type="primary">Tmem275</name>
</gene>
<proteinExistence type="inferred from homology"/>
<feature type="chain" id="PRO_0000446327" description="Transmembrane protein 275">
    <location>
        <begin position="1"/>
        <end position="177"/>
    </location>
</feature>
<feature type="transmembrane region" description="Helical" evidence="1">
    <location>
        <begin position="36"/>
        <end position="56"/>
    </location>
</feature>
<feature type="transmembrane region" description="Helical" evidence="1">
    <location>
        <begin position="63"/>
        <end position="83"/>
    </location>
</feature>
<feature type="region of interest" description="Disordered" evidence="2">
    <location>
        <begin position="1"/>
        <end position="20"/>
    </location>
</feature>
<feature type="region of interest" description="Disordered" evidence="2">
    <location>
        <begin position="113"/>
        <end position="177"/>
    </location>
</feature>
<feature type="compositionally biased region" description="Low complexity" evidence="2">
    <location>
        <begin position="128"/>
        <end position="161"/>
    </location>
</feature>
<evidence type="ECO:0000255" key="1"/>
<evidence type="ECO:0000256" key="2">
    <source>
        <dbReference type="SAM" id="MobiDB-lite"/>
    </source>
</evidence>
<evidence type="ECO:0000312" key="3">
    <source>
        <dbReference type="MGI" id="MGI:1923487"/>
    </source>
</evidence>
<keyword id="KW-0472">Membrane</keyword>
<keyword id="KW-1185">Reference proteome</keyword>
<keyword id="KW-0812">Transmembrane</keyword>
<keyword id="KW-1133">Transmembrane helix</keyword>